<organism>
    <name type="scientific">Staphylococcus aureus (strain NCTC 8325 / PS 47)</name>
    <dbReference type="NCBI Taxonomy" id="93061"/>
    <lineage>
        <taxon>Bacteria</taxon>
        <taxon>Bacillati</taxon>
        <taxon>Bacillota</taxon>
        <taxon>Bacilli</taxon>
        <taxon>Bacillales</taxon>
        <taxon>Staphylococcaceae</taxon>
        <taxon>Staphylococcus</taxon>
    </lineage>
</organism>
<name>SECG_STAA8</name>
<sequence>MIYYLSYIRNGGQFMHTFLIVLLIIDCIALITVVLLQEGKSSGLSGAISGGAEQLFGKQKQRGVDLFLNRLTIILSILFFVLMICISYLGM</sequence>
<reference key="1">
    <citation type="book" date="2006" name="Gram positive pathogens, 2nd edition">
        <title>The Staphylococcus aureus NCTC 8325 genome.</title>
        <editorList>
            <person name="Fischetti V."/>
            <person name="Novick R."/>
            <person name="Ferretti J."/>
            <person name="Portnoy D."/>
            <person name="Rood J."/>
        </editorList>
        <authorList>
            <person name="Gillaspy A.F."/>
            <person name="Worrell V."/>
            <person name="Orvis J."/>
            <person name="Roe B.A."/>
            <person name="Dyer D.W."/>
            <person name="Iandolo J.J."/>
        </authorList>
    </citation>
    <scope>NUCLEOTIDE SEQUENCE [LARGE SCALE GENOMIC DNA]</scope>
    <source>
        <strain>NCTC 8325 / PS 47</strain>
    </source>
</reference>
<reference key="2">
    <citation type="journal article" date="2010" name="J. Bacteriol.">
        <title>Synthetic effects of secG and secY2 mutations on exoproteome biogenesis in Staphylococcus aureus.</title>
        <authorList>
            <person name="Sibbald M.J."/>
            <person name="Winter T."/>
            <person name="van der Kooi-Pol M.M."/>
            <person name="Buist G."/>
            <person name="Tsompanidou E."/>
            <person name="Bosma T."/>
            <person name="Schafer T."/>
            <person name="Ohlsen K."/>
            <person name="Hecker M."/>
            <person name="Antelmann H."/>
            <person name="Engelmann S."/>
            <person name="van Dijl J.M."/>
        </authorList>
    </citation>
    <scope>ROLE IN EXPORT</scope>
    <scope>DISRUPTION PHENOTYPE</scope>
    <source>
        <strain>RN4220</strain>
        <strain>SH1000</strain>
    </source>
</reference>
<keyword id="KW-1003">Cell membrane</keyword>
<keyword id="KW-0472">Membrane</keyword>
<keyword id="KW-0653">Protein transport</keyword>
<keyword id="KW-1185">Reference proteome</keyword>
<keyword id="KW-0811">Translocation</keyword>
<keyword id="KW-0812">Transmembrane</keyword>
<keyword id="KW-1133">Transmembrane helix</keyword>
<keyword id="KW-0813">Transport</keyword>
<proteinExistence type="inferred from homology"/>
<dbReference type="EMBL" id="CP000253">
    <property type="protein sequence ID" value="ABD29929.1"/>
    <property type="molecule type" value="Genomic_DNA"/>
</dbReference>
<dbReference type="SMR" id="Q2G026"/>
<dbReference type="STRING" id="93061.SAOUHSC_00801"/>
<dbReference type="PaxDb" id="1280-SAXN108_0846"/>
<dbReference type="KEGG" id="sao:SAOUHSC_00801"/>
<dbReference type="PATRIC" id="fig|93061.5.peg.725"/>
<dbReference type="eggNOG" id="COG1314">
    <property type="taxonomic scope" value="Bacteria"/>
</dbReference>
<dbReference type="HOGENOM" id="CLU_094156_6_1_9"/>
<dbReference type="OrthoDB" id="1651166at2"/>
<dbReference type="Proteomes" id="UP000008816">
    <property type="component" value="Chromosome"/>
</dbReference>
<dbReference type="GO" id="GO:0005886">
    <property type="term" value="C:plasma membrane"/>
    <property type="evidence" value="ECO:0000318"/>
    <property type="project" value="GO_Central"/>
</dbReference>
<dbReference type="GO" id="GO:0015450">
    <property type="term" value="F:protein-transporting ATPase activity"/>
    <property type="evidence" value="ECO:0007669"/>
    <property type="project" value="InterPro"/>
</dbReference>
<dbReference type="GO" id="GO:0065002">
    <property type="term" value="P:intracellular protein transmembrane transport"/>
    <property type="evidence" value="ECO:0000318"/>
    <property type="project" value="GO_Central"/>
</dbReference>
<dbReference type="GO" id="GO:0009306">
    <property type="term" value="P:protein secretion"/>
    <property type="evidence" value="ECO:0007669"/>
    <property type="project" value="InterPro"/>
</dbReference>
<dbReference type="GO" id="GO:0043952">
    <property type="term" value="P:protein transport by the Sec complex"/>
    <property type="evidence" value="ECO:0000318"/>
    <property type="project" value="GO_Central"/>
</dbReference>
<dbReference type="InterPro" id="IPR004692">
    <property type="entry name" value="SecG"/>
</dbReference>
<dbReference type="NCBIfam" id="TIGR00810">
    <property type="entry name" value="secG"/>
    <property type="match status" value="1"/>
</dbReference>
<dbReference type="PANTHER" id="PTHR34182">
    <property type="entry name" value="PROTEIN-EXPORT MEMBRANE PROTEIN SECG"/>
    <property type="match status" value="1"/>
</dbReference>
<dbReference type="PANTHER" id="PTHR34182:SF1">
    <property type="entry name" value="PROTEIN-EXPORT MEMBRANE PROTEIN SECG"/>
    <property type="match status" value="1"/>
</dbReference>
<dbReference type="Pfam" id="PF03840">
    <property type="entry name" value="SecG"/>
    <property type="match status" value="1"/>
</dbReference>
<dbReference type="PRINTS" id="PR01651">
    <property type="entry name" value="SECGEXPORT"/>
</dbReference>
<comment type="function">
    <text evidence="1 3">Subunit of the protein translocation channel SecYEG (By similarity). While not essential, it considerably increases the export efficiency of extracellular proteins.</text>
</comment>
<comment type="subunit">
    <text evidence="1">Component of the Sec protein translocase complex. Heterotrimer consisting of SecY, SecE and SecG subunits. The heterotrimers can form oligomers, although 1 heterotrimer is thought to be able to translocate proteins. Interacts with SecDF, and other proteins may be involved. The channel interacts with SecA via subunit SecY (By similarity). Also part of the accessory SecA2/SecY2 protein translocation apparatus required to export cell wall protein GspB.</text>
</comment>
<comment type="subcellular location">
    <subcellularLocation>
        <location evidence="1">Cell membrane</location>
        <topology evidence="1">Multi-pass membrane protein</topology>
    </subcellularLocation>
</comment>
<comment type="disruption phenotype">
    <text evidence="3">Grows normally, a double secG/secY2 mutant enters stationary phase earlier. Significant differences in the export pattern of a number of extracellular proteins are seen in a secG deletion; the double secG/secY2 mutant exacerbates this effect (shown in RN4220). Single or double deletions are as virulent as wild-type (shown in RN4220 and SH1000).</text>
</comment>
<comment type="similarity">
    <text evidence="4">Belongs to the SecG family.</text>
</comment>
<gene>
    <name type="ordered locus">SAOUHSC_00801</name>
</gene>
<accession>Q2G026</accession>
<feature type="chain" id="PRO_0000414189" description="Protein translocase subunit SecG">
    <location>
        <begin position="1"/>
        <end position="91"/>
    </location>
</feature>
<feature type="transmembrane region" description="Helical" evidence="2">
    <location>
        <begin position="16"/>
        <end position="36"/>
    </location>
</feature>
<feature type="transmembrane region" description="Helical" evidence="2">
    <location>
        <begin position="71"/>
        <end position="91"/>
    </location>
</feature>
<protein>
    <recommendedName>
        <fullName>Protein translocase subunit SecG</fullName>
    </recommendedName>
</protein>
<evidence type="ECO:0000250" key="1"/>
<evidence type="ECO:0000255" key="2"/>
<evidence type="ECO:0000269" key="3">
    <source>
    </source>
</evidence>
<evidence type="ECO:0000305" key="4"/>